<name>TLYA_MYCTU</name>
<keyword id="KW-0002">3D-structure</keyword>
<keyword id="KW-0134">Cell wall</keyword>
<keyword id="KW-0204">Cytolysis</keyword>
<keyword id="KW-0963">Cytoplasm</keyword>
<keyword id="KW-0354">Hemolysis</keyword>
<keyword id="KW-1032">Host cell membrane</keyword>
<keyword id="KW-1043">Host membrane</keyword>
<keyword id="KW-0472">Membrane</keyword>
<keyword id="KW-0489">Methyltransferase</keyword>
<keyword id="KW-1185">Reference proteome</keyword>
<keyword id="KW-0690">Ribosome biogenesis</keyword>
<keyword id="KW-0694">RNA-binding</keyword>
<keyword id="KW-0698">rRNA processing</keyword>
<keyword id="KW-0949">S-adenosyl-L-methionine</keyword>
<keyword id="KW-0964">Secreted</keyword>
<keyword id="KW-0800">Toxin</keyword>
<keyword id="KW-0808">Transferase</keyword>
<keyword id="KW-0843">Virulence</keyword>
<protein>
    <recommendedName>
        <fullName>16S/23S rRNA (cytidine-2'-O)-methyltransferase TlyA</fullName>
        <ecNumber evidence="3">2.1.1.226</ecNumber>
        <ecNumber evidence="3">2.1.1.227</ecNumber>
    </recommendedName>
    <alternativeName>
        <fullName>16S rRNA (cytidine1409-2'-O)-methyltransferase</fullName>
    </alternativeName>
    <alternativeName>
        <fullName>23S rRNA (cytidine1920-2'-O)-methyltransferase</fullName>
    </alternativeName>
    <alternativeName>
        <fullName>Hemolysin TlyA</fullName>
    </alternativeName>
</protein>
<accession>P9WJ63</accession>
<accession>L0TA51</accession>
<accession>O07264</accession>
<accession>Q50760</accession>
<accession>Q79FL7</accession>
<accession>Q7D847</accession>
<evidence type="ECO:0000255" key="1">
    <source>
        <dbReference type="PROSITE-ProRule" id="PRU00182"/>
    </source>
</evidence>
<evidence type="ECO:0000269" key="2">
    <source>
    </source>
</evidence>
<evidence type="ECO:0000269" key="3">
    <source>
    </source>
</evidence>
<evidence type="ECO:0000269" key="4">
    <source>
    </source>
</evidence>
<evidence type="ECO:0000269" key="5">
    <source>
    </source>
</evidence>
<evidence type="ECO:0000269" key="6">
    <source>
    </source>
</evidence>
<evidence type="ECO:0000269" key="7">
    <source>
    </source>
</evidence>
<evidence type="ECO:0000269" key="8">
    <source>
    </source>
</evidence>
<evidence type="ECO:0000305" key="9"/>
<evidence type="ECO:0007829" key="10">
    <source>
        <dbReference type="PDB" id="5KS2"/>
    </source>
</evidence>
<evidence type="ECO:0007829" key="11">
    <source>
        <dbReference type="PDB" id="5KYG"/>
    </source>
</evidence>
<reference key="1">
    <citation type="journal article" date="1998" name="Microbiology">
        <title>Characterization of a haemolysin from Mycobacterium tuberculosis with homology to a virulence factor of Serpulina hyodysenteriae.</title>
        <authorList>
            <person name="Wren B.W."/>
            <person name="Stabler R.A."/>
            <person name="Das S.S."/>
            <person name="Butcher P.D."/>
            <person name="Mangan J.A."/>
            <person name="Clarke J.D."/>
            <person name="Casali N."/>
            <person name="Parish T."/>
            <person name="Stoker N.G."/>
        </authorList>
    </citation>
    <scope>NUCLEOTIDE SEQUENCE [GENOMIC DNA]</scope>
    <scope>FUNCTION IN HEMOLYSIS</scope>
    <source>
        <strain>ATCC 25618 / H37Rv</strain>
    </source>
</reference>
<reference key="2">
    <citation type="journal article" date="1998" name="Nature">
        <title>Deciphering the biology of Mycobacterium tuberculosis from the complete genome sequence.</title>
        <authorList>
            <person name="Cole S.T."/>
            <person name="Brosch R."/>
            <person name="Parkhill J."/>
            <person name="Garnier T."/>
            <person name="Churcher C.M."/>
            <person name="Harris D.E."/>
            <person name="Gordon S.V."/>
            <person name="Eiglmeier K."/>
            <person name="Gas S."/>
            <person name="Barry C.E. III"/>
            <person name="Tekaia F."/>
            <person name="Badcock K."/>
            <person name="Basham D."/>
            <person name="Brown D."/>
            <person name="Chillingworth T."/>
            <person name="Connor R."/>
            <person name="Davies R.M."/>
            <person name="Devlin K."/>
            <person name="Feltwell T."/>
            <person name="Gentles S."/>
            <person name="Hamlin N."/>
            <person name="Holroyd S."/>
            <person name="Hornsby T."/>
            <person name="Jagels K."/>
            <person name="Krogh A."/>
            <person name="McLean J."/>
            <person name="Moule S."/>
            <person name="Murphy L.D."/>
            <person name="Oliver S."/>
            <person name="Osborne J."/>
            <person name="Quail M.A."/>
            <person name="Rajandream M.A."/>
            <person name="Rogers J."/>
            <person name="Rutter S."/>
            <person name="Seeger K."/>
            <person name="Skelton S."/>
            <person name="Squares S."/>
            <person name="Squares R."/>
            <person name="Sulston J.E."/>
            <person name="Taylor K."/>
            <person name="Whitehead S."/>
            <person name="Barrell B.G."/>
        </authorList>
    </citation>
    <scope>NUCLEOTIDE SEQUENCE [LARGE SCALE GENOMIC DNA]</scope>
    <source>
        <strain>ATCC 25618 / H37Rv</strain>
    </source>
</reference>
<reference key="3">
    <citation type="journal article" date="2005" name="Antimicrob. Agents Chemother.">
        <title>Mutation of tlyA confers capreomycin resistance in Mycobacterium tuberculosis.</title>
        <authorList>
            <person name="Maus C.E."/>
            <person name="Plikaytis B.B."/>
            <person name="Shinnick T.M."/>
        </authorList>
    </citation>
    <scope>DISRUPTION PHENOTYPE</scope>
    <source>
        <strain>ATCC 25618 / H37Rv</strain>
    </source>
</reference>
<reference key="4">
    <citation type="journal article" date="2006" name="Mol. Cell">
        <title>Capreomycin binds across the ribosomal subunit interface using tlyA-encoded 2'-O-methylations in 16S and 23S rRNAs.</title>
        <authorList>
            <person name="Johansen S.K."/>
            <person name="Maus C.E."/>
            <person name="Plikaytis B.B."/>
            <person name="Douthwaite S."/>
        </authorList>
    </citation>
    <scope>FUNCTION AS A METHYLTRANSFERASE</scope>
    <scope>CATALYTIC ACTIVITY</scope>
    <source>
        <strain>ATCC 25618 / H37Rv</strain>
    </source>
</reference>
<reference key="5">
    <citation type="journal article" date="2010" name="BMC Biochem.">
        <title>Molecular characterization of tlyA gene product, Rv1694 of Mycobacterium tuberculosis: a non-conventional hemolysin and a ribosomal RNA methyl transferase.</title>
        <authorList>
            <person name="Rahman A."/>
            <person name="Srivastava S.S."/>
            <person name="Sneh A."/>
            <person name="Ahmed N."/>
            <person name="Krishnasastry M.V."/>
        </authorList>
    </citation>
    <scope>FUNCTION AS A METHYLTRANSFERASE AND IN HEMOLYSIS</scope>
    <scope>SUBUNIT</scope>
    <scope>SUBCELLULAR LOCATION</scope>
    <source>
        <strain>ATCC 25618 / H37Rv</strain>
    </source>
</reference>
<reference key="6">
    <citation type="journal article" date="2011" name="Mol. Cell. Proteomics">
        <title>Proteogenomic analysis of Mycobacterium tuberculosis by high resolution mass spectrometry.</title>
        <authorList>
            <person name="Kelkar D.S."/>
            <person name="Kumar D."/>
            <person name="Kumar P."/>
            <person name="Balakrishnan L."/>
            <person name="Muthusamy B."/>
            <person name="Yadav A.K."/>
            <person name="Shrivastava P."/>
            <person name="Marimuthu A."/>
            <person name="Anand S."/>
            <person name="Sundaram H."/>
            <person name="Kingsbury R."/>
            <person name="Harsha H.C."/>
            <person name="Nair B."/>
            <person name="Prasad T.S."/>
            <person name="Chauhan D.S."/>
            <person name="Katoch K."/>
            <person name="Katoch V.M."/>
            <person name="Kumar P."/>
            <person name="Chaerkady R."/>
            <person name="Ramachandran S."/>
            <person name="Dash D."/>
            <person name="Pandey A."/>
        </authorList>
    </citation>
    <scope>IDENTIFICATION BY MASS SPECTROMETRY [LARGE SCALE ANALYSIS]</scope>
    <source>
        <strain>ATCC 25618 / H37Rv</strain>
    </source>
</reference>
<reference key="7">
    <citation type="journal article" date="2011" name="BMC Struct. Biol.">
        <title>Molecular modeling and in silico characterization of Mycobacterium tuberculosis TlyA: possible misannotation of this tubercle bacilli-hemolysin.</title>
        <authorList>
            <person name="Arenas N.E."/>
            <person name="Salazar L.M."/>
            <person name="Soto C.Y."/>
            <person name="Vizcaino C."/>
            <person name="Patarroyo M.E."/>
            <person name="Patarroyo M.A."/>
            <person name="Gomez A."/>
        </authorList>
    </citation>
    <scope>3D-STRUCTURE MODELING</scope>
    <scope>FUNCTION</scope>
</reference>
<reference key="8">
    <citation type="journal article" date="2015" name="Front. Cell. Infect. Microbiol.">
        <title>Mycobacterial tlyA gene product is localized to the cell-wall without signal sequence.</title>
        <authorList>
            <person name="Kumar S."/>
            <person name="Mittal E."/>
            <person name="Deore S."/>
            <person name="Kumar A."/>
            <person name="Rahman A."/>
            <person name="Krishnasastry M.V."/>
        </authorList>
    </citation>
    <scope>SUBCELLULAR LOCATION</scope>
    <source>
        <strain>H37Rv</strain>
    </source>
</reference>
<reference key="9">
    <citation type="journal article" date="2015" name="J. Biol. Chem.">
        <title>Mycobacterium tuberculosis TlyA protein negatively regulates T helper (Th) 1 and Th17 differentiation and promotes tuberculosis pathogenesis.</title>
        <authorList>
            <person name="Rahman M.A."/>
            <person name="Sobia P."/>
            <person name="Dwivedi V.P."/>
            <person name="Bhawsar A."/>
            <person name="Singh D.K."/>
            <person name="Sharma P."/>
            <person name="Moodley P."/>
            <person name="Van Kaer L."/>
            <person name="Bishai W.R."/>
            <person name="Das G."/>
        </authorList>
    </citation>
    <scope>FUNCTION</scope>
    <scope>DISRUPTION PHENOTYPE</scope>
    <source>
        <strain>H37Rv</strain>
    </source>
</reference>
<dbReference type="EC" id="2.1.1.226" evidence="3"/>
<dbReference type="EC" id="2.1.1.227" evidence="3"/>
<dbReference type="EMBL" id="X98295">
    <property type="protein sequence ID" value="CAA66941.1"/>
    <property type="molecule type" value="Genomic_DNA"/>
</dbReference>
<dbReference type="EMBL" id="AL123456">
    <property type="protein sequence ID" value="CCP44459.1"/>
    <property type="molecule type" value="Genomic_DNA"/>
</dbReference>
<dbReference type="PIR" id="E70502">
    <property type="entry name" value="E70502"/>
</dbReference>
<dbReference type="RefSeq" id="NP_216210.1">
    <property type="nucleotide sequence ID" value="NC_000962.3"/>
</dbReference>
<dbReference type="RefSeq" id="WP_003408382.1">
    <property type="nucleotide sequence ID" value="NZ_NVQJ01000010.1"/>
</dbReference>
<dbReference type="PDB" id="5KS2">
    <property type="method" value="X-ray"/>
    <property type="resolution" value="2.18 A"/>
    <property type="chains" value="A=60-268"/>
</dbReference>
<dbReference type="PDB" id="5KYG">
    <property type="method" value="X-ray"/>
    <property type="resolution" value="1.90 A"/>
    <property type="chains" value="A=60-268"/>
</dbReference>
<dbReference type="PDB" id="7S0S">
    <property type="method" value="EM"/>
    <property type="resolution" value="3.05 A"/>
    <property type="chains" value="B=1-268"/>
</dbReference>
<dbReference type="PDBsum" id="5KS2"/>
<dbReference type="PDBsum" id="5KYG"/>
<dbReference type="PDBsum" id="7S0S"/>
<dbReference type="SMR" id="P9WJ63"/>
<dbReference type="FunCoup" id="P9WJ63">
    <property type="interactions" value="107"/>
</dbReference>
<dbReference type="STRING" id="83332.Rv1694"/>
<dbReference type="DrugBank" id="DB00314">
    <property type="generic name" value="Capreomycin"/>
</dbReference>
<dbReference type="DrugBank" id="DB06827">
    <property type="generic name" value="Viomycin"/>
</dbReference>
<dbReference type="PaxDb" id="83332-Rv1694"/>
<dbReference type="DNASU" id="885396"/>
<dbReference type="GeneID" id="45425663"/>
<dbReference type="GeneID" id="885396"/>
<dbReference type="KEGG" id="mtu:Rv1694"/>
<dbReference type="KEGG" id="mtv:RVBD_1694"/>
<dbReference type="TubercuList" id="Rv1694"/>
<dbReference type="eggNOG" id="COG1189">
    <property type="taxonomic scope" value="Bacteria"/>
</dbReference>
<dbReference type="InParanoid" id="P9WJ63"/>
<dbReference type="OrthoDB" id="9784736at2"/>
<dbReference type="PhylomeDB" id="P9WJ63"/>
<dbReference type="BioCyc" id="MetaCyc:G185E-5885-MONOMER"/>
<dbReference type="BRENDA" id="2.1.1.226">
    <property type="organism ID" value="3445"/>
</dbReference>
<dbReference type="BRENDA" id="2.1.1.227">
    <property type="organism ID" value="3445"/>
</dbReference>
<dbReference type="Proteomes" id="UP000001584">
    <property type="component" value="Chromosome"/>
</dbReference>
<dbReference type="GO" id="GO:0005737">
    <property type="term" value="C:cytoplasm"/>
    <property type="evidence" value="ECO:0007669"/>
    <property type="project" value="UniProtKB-SubCell"/>
</dbReference>
<dbReference type="GO" id="GO:0005576">
    <property type="term" value="C:extracellular region"/>
    <property type="evidence" value="ECO:0007669"/>
    <property type="project" value="UniProtKB-KW"/>
</dbReference>
<dbReference type="GO" id="GO:0020002">
    <property type="term" value="C:host cell plasma membrane"/>
    <property type="evidence" value="ECO:0007669"/>
    <property type="project" value="UniProtKB-SubCell"/>
</dbReference>
<dbReference type="GO" id="GO:0016020">
    <property type="term" value="C:membrane"/>
    <property type="evidence" value="ECO:0007669"/>
    <property type="project" value="UniProtKB-KW"/>
</dbReference>
<dbReference type="GO" id="GO:0003723">
    <property type="term" value="F:RNA binding"/>
    <property type="evidence" value="ECO:0007669"/>
    <property type="project" value="UniProtKB-KW"/>
</dbReference>
<dbReference type="GO" id="GO:0008649">
    <property type="term" value="F:rRNA methyltransferase activity"/>
    <property type="evidence" value="ECO:0000314"/>
    <property type="project" value="MTBBASE"/>
</dbReference>
<dbReference type="GO" id="GO:0090729">
    <property type="term" value="F:toxin activity"/>
    <property type="evidence" value="ECO:0007669"/>
    <property type="project" value="UniProtKB-KW"/>
</dbReference>
<dbReference type="GO" id="GO:0031167">
    <property type="term" value="P:rRNA methylation"/>
    <property type="evidence" value="ECO:0000314"/>
    <property type="project" value="MTBBASE"/>
</dbReference>
<dbReference type="GO" id="GO:0001897">
    <property type="term" value="P:symbiont-mediated cytolysis of host cell"/>
    <property type="evidence" value="ECO:0000314"/>
    <property type="project" value="MTBBASE"/>
</dbReference>
<dbReference type="CDD" id="cd02440">
    <property type="entry name" value="AdoMet_MTases"/>
    <property type="match status" value="1"/>
</dbReference>
<dbReference type="CDD" id="cd00165">
    <property type="entry name" value="S4"/>
    <property type="match status" value="1"/>
</dbReference>
<dbReference type="Gene3D" id="3.10.290.10">
    <property type="entry name" value="RNA-binding S4 domain"/>
    <property type="match status" value="1"/>
</dbReference>
<dbReference type="Gene3D" id="3.40.50.150">
    <property type="entry name" value="Vaccinia Virus protein VP39"/>
    <property type="match status" value="1"/>
</dbReference>
<dbReference type="InterPro" id="IPR004538">
    <property type="entry name" value="Hemolysin_A/TlyA"/>
</dbReference>
<dbReference type="InterPro" id="IPR002877">
    <property type="entry name" value="RNA_MeTrfase_FtsJ_dom"/>
</dbReference>
<dbReference type="InterPro" id="IPR002942">
    <property type="entry name" value="S4_RNA-bd"/>
</dbReference>
<dbReference type="InterPro" id="IPR036986">
    <property type="entry name" value="S4_RNA-bd_sf"/>
</dbReference>
<dbReference type="InterPro" id="IPR029063">
    <property type="entry name" value="SAM-dependent_MTases_sf"/>
</dbReference>
<dbReference type="InterPro" id="IPR047048">
    <property type="entry name" value="TlyA"/>
</dbReference>
<dbReference type="NCBIfam" id="TIGR00478">
    <property type="entry name" value="tly"/>
    <property type="match status" value="1"/>
</dbReference>
<dbReference type="PANTHER" id="PTHR32319">
    <property type="entry name" value="BACTERIAL HEMOLYSIN-LIKE PROTEIN"/>
    <property type="match status" value="1"/>
</dbReference>
<dbReference type="PANTHER" id="PTHR32319:SF0">
    <property type="entry name" value="BACTERIAL HEMOLYSIN-LIKE PROTEIN"/>
    <property type="match status" value="1"/>
</dbReference>
<dbReference type="Pfam" id="PF01728">
    <property type="entry name" value="FtsJ"/>
    <property type="match status" value="1"/>
</dbReference>
<dbReference type="Pfam" id="PF01479">
    <property type="entry name" value="S4"/>
    <property type="match status" value="1"/>
</dbReference>
<dbReference type="PIRSF" id="PIRSF005578">
    <property type="entry name" value="TlyA"/>
    <property type="match status" value="1"/>
</dbReference>
<dbReference type="SMART" id="SM00363">
    <property type="entry name" value="S4"/>
    <property type="match status" value="1"/>
</dbReference>
<dbReference type="SUPFAM" id="SSF55174">
    <property type="entry name" value="Alpha-L RNA-binding motif"/>
    <property type="match status" value="1"/>
</dbReference>
<dbReference type="SUPFAM" id="SSF53335">
    <property type="entry name" value="S-adenosyl-L-methionine-dependent methyltransferases"/>
    <property type="match status" value="1"/>
</dbReference>
<dbReference type="PROSITE" id="PS50889">
    <property type="entry name" value="S4"/>
    <property type="match status" value="1"/>
</dbReference>
<comment type="function">
    <text evidence="3 4 5 6 8">Acts as a host evasion factor, that significantly contributes to the pathogenesis of M.tuberculosis by modulating adaptive immune responses by inhibiting host-protective Th1 and Th17 cytokine responses as well as autophagy (PubMed:25847237). Catalyzes the 2'-O-methylation at nucleotides C1409 in 16S rRNA and C1920 in 23S rRNA (PubMed:16857584, PubMed:20854656). Is likely involved in ribosomal biogenesis (PubMed:21443791). Also exhibits hemolytic activity in vitro, by binding with and oligomerizing into host cell membranes (PubMed:20854656, PubMed:9611795).</text>
</comment>
<comment type="catalytic activity">
    <reaction evidence="3">
        <text>cytidine(1409) in 16S rRNA + S-adenosyl-L-methionine = 2'-O-methylcytidine(1409) in 16S rRNA + S-adenosyl-L-homocysteine + H(+)</text>
        <dbReference type="Rhea" id="RHEA:43204"/>
        <dbReference type="Rhea" id="RHEA-COMP:10405"/>
        <dbReference type="Rhea" id="RHEA-COMP:10406"/>
        <dbReference type="ChEBI" id="CHEBI:15378"/>
        <dbReference type="ChEBI" id="CHEBI:57856"/>
        <dbReference type="ChEBI" id="CHEBI:59789"/>
        <dbReference type="ChEBI" id="CHEBI:74495"/>
        <dbReference type="ChEBI" id="CHEBI:82748"/>
        <dbReference type="EC" id="2.1.1.227"/>
    </reaction>
</comment>
<comment type="catalytic activity">
    <reaction evidence="3">
        <text>cytidine(1920) in 23S rRNA + S-adenosyl-L-methionine = 2'-O-methylcytidine(1920) in 23S rRNA + S-adenosyl-L-homocysteine + H(+)</text>
        <dbReference type="Rhea" id="RHEA:43200"/>
        <dbReference type="Rhea" id="RHEA-COMP:10403"/>
        <dbReference type="Rhea" id="RHEA-COMP:10404"/>
        <dbReference type="ChEBI" id="CHEBI:15378"/>
        <dbReference type="ChEBI" id="CHEBI:57856"/>
        <dbReference type="ChEBI" id="CHEBI:59789"/>
        <dbReference type="ChEBI" id="CHEBI:74495"/>
        <dbReference type="ChEBI" id="CHEBI:82748"/>
        <dbReference type="EC" id="2.1.1.226"/>
    </reaction>
</comment>
<comment type="subunit">
    <text evidence="4">Can form oligomers on macrophage phagosomal membranes.</text>
</comment>
<comment type="subcellular location">
    <subcellularLocation>
        <location evidence="4">Cytoplasm</location>
    </subcellularLocation>
    <subcellularLocation>
        <location evidence="7">Secreted</location>
        <location evidence="7">Cell wall</location>
    </subcellularLocation>
    <subcellularLocation>
        <location evidence="4">Host cell membrane</location>
    </subcellularLocation>
    <text evidence="4 7">Can bind to target membranes such as macrophage phagosomal membranes (PubMed:20854656). In native and recombinant hosts (M.smegmatis and E.coli), M.tuberculosis TlyA can reach the bacterial surface in functional form and colocalizes with the HBHA protein which is known to be part of cell-wall (PubMed:26347855). TlyA does not seem to depend on either Tat or Sec pathways for translocation to cell-wall (PubMed:26347855). Appears to be capable of reaching the extra-cellular milieu using a vesicle mediated transport (PubMed:26347855).</text>
</comment>
<comment type="disruption phenotype">
    <text evidence="2 6">Cells lacking this gene induce increased IL-12 and reduced IL-1beta and IL-10 cytokine responses, which sharply contrasts with the immune responses induced by wild-type M.tuberculosis (PubMed:25847237). They are also more susceptible to autophagy in macrophages (PubMed:25847237). Consequently, animals infected with the TlyA-deficient mutant M.tuberculosis organisms exhibit increased host-protective immune responses, reduced bacillary load, and increased survival compared with animals infected with wild-type M.tuberculosis (PubMed:25847237). Disruption of this gene leads to capreomycin resistance (PubMed:15673735).</text>
</comment>
<comment type="similarity">
    <text evidence="9">Belongs to the TlyA family.</text>
</comment>
<organism>
    <name type="scientific">Mycobacterium tuberculosis (strain ATCC 25618 / H37Rv)</name>
    <dbReference type="NCBI Taxonomy" id="83332"/>
    <lineage>
        <taxon>Bacteria</taxon>
        <taxon>Bacillati</taxon>
        <taxon>Actinomycetota</taxon>
        <taxon>Actinomycetes</taxon>
        <taxon>Mycobacteriales</taxon>
        <taxon>Mycobacteriaceae</taxon>
        <taxon>Mycobacterium</taxon>
        <taxon>Mycobacterium tuberculosis complex</taxon>
    </lineage>
</organism>
<proteinExistence type="evidence at protein level"/>
<gene>
    <name type="primary">tlyA</name>
    <name type="ordered locus">Rv1694</name>
</gene>
<feature type="chain" id="PRO_0000415501" description="16S/23S rRNA (cytidine-2'-O)-methyltransferase TlyA">
    <location>
        <begin position="1"/>
        <end position="268"/>
    </location>
</feature>
<feature type="domain" description="S4 RNA-binding" evidence="1">
    <location>
        <begin position="5"/>
        <end position="67"/>
    </location>
</feature>
<feature type="helix" evidence="11">
    <location>
        <begin position="66"/>
        <end position="77"/>
    </location>
</feature>
<feature type="strand" evidence="11">
    <location>
        <begin position="85"/>
        <end position="90"/>
    </location>
</feature>
<feature type="strand" evidence="10">
    <location>
        <begin position="92"/>
        <end position="94"/>
    </location>
</feature>
<feature type="helix" evidence="11">
    <location>
        <begin position="95"/>
        <end position="102"/>
    </location>
</feature>
<feature type="strand" evidence="11">
    <location>
        <begin position="106"/>
        <end position="112"/>
    </location>
</feature>
<feature type="strand" evidence="11">
    <location>
        <begin position="114"/>
        <end position="116"/>
    </location>
</feature>
<feature type="helix" evidence="11">
    <location>
        <begin position="120"/>
        <end position="123"/>
    </location>
</feature>
<feature type="strand" evidence="11">
    <location>
        <begin position="128"/>
        <end position="132"/>
    </location>
</feature>
<feature type="helix" evidence="11">
    <location>
        <begin position="136"/>
        <end position="138"/>
    </location>
</feature>
<feature type="helix" evidence="11">
    <location>
        <begin position="141"/>
        <end position="144"/>
    </location>
</feature>
<feature type="strand" evidence="11">
    <location>
        <begin position="148"/>
        <end position="153"/>
    </location>
</feature>
<feature type="strand" evidence="11">
    <location>
        <begin position="156"/>
        <end position="158"/>
    </location>
</feature>
<feature type="helix" evidence="11">
    <location>
        <begin position="160"/>
        <end position="170"/>
    </location>
</feature>
<feature type="strand" evidence="11">
    <location>
        <begin position="171"/>
        <end position="181"/>
    </location>
</feature>
<feature type="helix" evidence="11">
    <location>
        <begin position="183"/>
        <end position="186"/>
    </location>
</feature>
<feature type="turn" evidence="11">
    <location>
        <begin position="189"/>
        <end position="191"/>
    </location>
</feature>
<feature type="helix" evidence="11">
    <location>
        <begin position="194"/>
        <end position="196"/>
    </location>
</feature>
<feature type="helix" evidence="11">
    <location>
        <begin position="201"/>
        <end position="217"/>
    </location>
</feature>
<feature type="strand" evidence="11">
    <location>
        <begin position="221"/>
        <end position="227"/>
    </location>
</feature>
<feature type="helix" evidence="11">
    <location>
        <begin position="233"/>
        <end position="235"/>
    </location>
</feature>
<feature type="strand" evidence="11">
    <location>
        <begin position="239"/>
        <end position="246"/>
    </location>
</feature>
<feature type="helix" evidence="11">
    <location>
        <begin position="253"/>
        <end position="266"/>
    </location>
</feature>
<sequence length="268" mass="28074">MARRARVDAELVRRGLARSRQQAAELIGAGKVRIDGLPAVKPATAVSDTTALTVVTDSERAWVSRGAHKLVGALEAFAIAVAGRRCLDAGASTGGFTEVLLDRGAAHVVAADVGYGQLAWSLRNDPRVVVLERTNARGLTPEAIGGRVDLVVADLSFISLATVLPALVGCASRDADIVPLVKPQFEVGKGQVGPGGVVHDPQLRARSVLAVARRAQELGWHSVGVKASPLPGPSGNVEYFLWLRTQTDRALSAKGLEDAVHRAISEGP</sequence>